<name>Y131_SIRV1</name>
<accession>Q8QL44</accession>
<accession>Q5TJA8</accession>
<protein>
    <recommendedName>
        <fullName>Uncharacterized protein 131</fullName>
    </recommendedName>
</protein>
<reference key="1">
    <citation type="journal article" date="2001" name="Virology">
        <title>Sequences and replication of genomes of the archaeal rudiviruses SIRV1 and SIRV2: relationships to the archaeal lipothrixvirus SIFV and some eukaryal viruses.</title>
        <authorList>
            <person name="Peng X."/>
            <person name="Blum H."/>
            <person name="She Q."/>
            <person name="Mallok S."/>
            <person name="Bruegger K."/>
            <person name="Garrett R.A."/>
            <person name="Zillig W."/>
            <person name="Prangishvili D."/>
        </authorList>
    </citation>
    <scope>NUCLEOTIDE SEQUENCE [LARGE SCALE GENOMIC DNA]</scope>
    <source>
        <strain>Isolate variant VIII</strain>
    </source>
</reference>
<reference key="2">
    <citation type="journal article" date="2004" name="Mol. Microbiol.">
        <title>Multiple variants of the archaeal DNA rudivirus SIRV1 in a single host and a novel mechanism of genomic variation.</title>
        <authorList>
            <person name="Peng X."/>
            <person name="Kessler A."/>
            <person name="Phan H."/>
            <person name="Garrett R.A."/>
            <person name="Prangishvili D."/>
        </authorList>
    </citation>
    <scope>NUCLEOTIDE SEQUENCE [LARGE SCALE GENOMIC DNA]</scope>
    <source>
        <strain>Isolate variant XX</strain>
    </source>
</reference>
<organism>
    <name type="scientific">Sulfolobus islandicus rod-shaped virus 1</name>
    <name type="common">SIRV-1</name>
    <name type="synonym">Sulfolobus virus SIRV-1</name>
    <dbReference type="NCBI Taxonomy" id="157898"/>
    <lineage>
        <taxon>Viruses</taxon>
        <taxon>Adnaviria</taxon>
        <taxon>Zilligvirae</taxon>
        <taxon>Taleaviricota</taxon>
        <taxon>Tokiviricetes</taxon>
        <taxon>Ligamenvirales</taxon>
        <taxon>Rudiviridae</taxon>
        <taxon>Icerudivirus</taxon>
        <taxon>Icerudivirus SIRV1</taxon>
    </lineage>
</organism>
<dbReference type="EMBL" id="AJ414696">
    <property type="protein sequence ID" value="CAC93965.1"/>
    <property type="molecule type" value="Genomic_DNA"/>
</dbReference>
<dbReference type="EMBL" id="AJ748296">
    <property type="protein sequence ID" value="CAG38830.1"/>
    <property type="molecule type" value="Genomic_DNA"/>
</dbReference>
<dbReference type="RefSeq" id="NP_666598.1">
    <property type="nucleotide sequence ID" value="NC_004087.1"/>
</dbReference>
<dbReference type="PDB" id="2X5G">
    <property type="method" value="X-ray"/>
    <property type="resolution" value="2.00 A"/>
    <property type="chains" value="A=2-96"/>
</dbReference>
<dbReference type="PDB" id="2X5H">
    <property type="method" value="X-ray"/>
    <property type="resolution" value="1.80 A"/>
    <property type="chains" value="A/B/C/D=1-96"/>
</dbReference>
<dbReference type="PDB" id="2X5T">
    <property type="method" value="X-ray"/>
    <property type="resolution" value="2.20 A"/>
    <property type="chains" value="A=2-96"/>
</dbReference>
<dbReference type="PDBsum" id="2X5G"/>
<dbReference type="PDBsum" id="2X5H"/>
<dbReference type="PDBsum" id="2X5T"/>
<dbReference type="SMR" id="Q8QL44"/>
<dbReference type="KEGG" id="vg:951383"/>
<dbReference type="OrthoDB" id="18504at10239"/>
<dbReference type="EvolutionaryTrace" id="Q8QL44"/>
<dbReference type="Proteomes" id="UP000002270">
    <property type="component" value="Genome"/>
</dbReference>
<dbReference type="Proteomes" id="UP000223181">
    <property type="component" value="Segment"/>
</dbReference>
<dbReference type="Gene3D" id="3.30.720.60">
    <property type="match status" value="1"/>
</dbReference>
<dbReference type="InterPro" id="IPR048991">
    <property type="entry name" value="PHA01746-like_dom"/>
</dbReference>
<dbReference type="Pfam" id="PF21017">
    <property type="entry name" value="PHA01746"/>
    <property type="match status" value="1"/>
</dbReference>
<sequence length="131" mass="15320">MASLKEIIDELGKQAKEQNKIASRILKIKGIKRIVVQLNAVPQDGKIRYSLTIHSQNNFRKQIGITPQDAEDLKLIAEFLEKYSDFLNEYVKFTPRNNNAIQEEEIDMEQQEEKEEKPREKGKKKSVEEEF</sequence>
<gene>
    <name type="ORF">131</name>
</gene>
<organismHost>
    <name type="scientific">Saccharolobus islandicus</name>
    <name type="common">Sulfolobus islandicus</name>
    <dbReference type="NCBI Taxonomy" id="43080"/>
</organismHost>
<keyword id="KW-0002">3D-structure</keyword>
<keyword id="KW-1185">Reference proteome</keyword>
<proteinExistence type="evidence at protein level"/>
<feature type="chain" id="PRO_0000342322" description="Uncharacterized protein 131">
    <location>
        <begin position="1"/>
        <end position="131"/>
    </location>
</feature>
<feature type="region of interest" description="Disordered" evidence="1">
    <location>
        <begin position="99"/>
        <end position="131"/>
    </location>
</feature>
<feature type="compositionally biased region" description="Acidic residues" evidence="1">
    <location>
        <begin position="102"/>
        <end position="113"/>
    </location>
</feature>
<feature type="compositionally biased region" description="Basic and acidic residues" evidence="1">
    <location>
        <begin position="114"/>
        <end position="131"/>
    </location>
</feature>
<feature type="helix" evidence="2">
    <location>
        <begin position="1"/>
        <end position="18"/>
    </location>
</feature>
<feature type="strand" evidence="2">
    <location>
        <begin position="22"/>
        <end position="25"/>
    </location>
</feature>
<feature type="strand" evidence="2">
    <location>
        <begin position="32"/>
        <end position="43"/>
    </location>
</feature>
<feature type="strand" evidence="2">
    <location>
        <begin position="46"/>
        <end position="55"/>
    </location>
</feature>
<feature type="strand" evidence="2">
    <location>
        <begin position="58"/>
        <end position="65"/>
    </location>
</feature>
<feature type="helix" evidence="2">
    <location>
        <begin position="67"/>
        <end position="69"/>
    </location>
</feature>
<feature type="helix" evidence="2">
    <location>
        <begin position="70"/>
        <end position="82"/>
    </location>
</feature>
<feature type="helix" evidence="2">
    <location>
        <begin position="84"/>
        <end position="90"/>
    </location>
</feature>
<evidence type="ECO:0000256" key="1">
    <source>
        <dbReference type="SAM" id="MobiDB-lite"/>
    </source>
</evidence>
<evidence type="ECO:0007829" key="2">
    <source>
        <dbReference type="PDB" id="2X5H"/>
    </source>
</evidence>